<proteinExistence type="predicted"/>
<evidence type="ECO:0000269" key="1">
    <source>
    </source>
</evidence>
<evidence type="ECO:0000269" key="2">
    <source>
    </source>
</evidence>
<evidence type="ECO:0000269" key="3">
    <source>
    </source>
</evidence>
<evidence type="ECO:0000269" key="4">
    <source>
    </source>
</evidence>
<keyword id="KW-0131">Cell cycle</keyword>
<keyword id="KW-1185">Reference proteome</keyword>
<gene>
    <name type="primary">BNS1</name>
    <name type="ordered locus">YGR230W</name>
    <name type="ORF">G8558</name>
</gene>
<feature type="chain" id="PRO_0000202851" description="Protein BNS1">
    <location>
        <begin position="1"/>
        <end position="137"/>
    </location>
</feature>
<organism>
    <name type="scientific">Saccharomyces cerevisiae (strain ATCC 204508 / S288c)</name>
    <name type="common">Baker's yeast</name>
    <dbReference type="NCBI Taxonomy" id="559292"/>
    <lineage>
        <taxon>Eukaryota</taxon>
        <taxon>Fungi</taxon>
        <taxon>Dikarya</taxon>
        <taxon>Ascomycota</taxon>
        <taxon>Saccharomycotina</taxon>
        <taxon>Saccharomycetes</taxon>
        <taxon>Saccharomycetales</taxon>
        <taxon>Saccharomycetaceae</taxon>
        <taxon>Saccharomyces</taxon>
    </lineage>
</organism>
<sequence length="137" mass="15840">MSYGGSASQDIVTKLIRKIQNTSVSCTRRDENLDSFNQHLKMSLKVAHNTKTFAKHCLHRQVFKNTYRKRKAVEDQRKNLNTQLRQKFASPSDNLLSPCSRKLNDHKSKLFSAKSQPKTLEFVRGKQNIPRKPNVDI</sequence>
<name>BNS1_YEAST</name>
<protein>
    <recommendedName>
        <fullName>Protein BNS1</fullName>
    </recommendedName>
</protein>
<accession>P50084</accession>
<accession>D6VV10</accession>
<comment type="function">
    <text evidence="1 2 3 4">Component of the FEAR (CDC14 early anaphase release) network which promotes CDC14 release from the nucleolus during early anaphase and is required for the efficient segregation of telomeric and nucleolar regions. Although BNS1 can partially compensate for a lack of SPO12 function when overexpressed, it does not appear to play any role in controlling meiotic nuclear division.</text>
</comment>
<dbReference type="EMBL" id="X87941">
    <property type="protein sequence ID" value="CAA61180.1"/>
    <property type="molecule type" value="Genomic_DNA"/>
</dbReference>
<dbReference type="EMBL" id="Z73015">
    <property type="protein sequence ID" value="CAA97258.1"/>
    <property type="molecule type" value="Genomic_DNA"/>
</dbReference>
<dbReference type="EMBL" id="AY558380">
    <property type="protein sequence ID" value="AAS56706.1"/>
    <property type="molecule type" value="Genomic_DNA"/>
</dbReference>
<dbReference type="EMBL" id="BK006941">
    <property type="protein sequence ID" value="DAA08321.1"/>
    <property type="molecule type" value="Genomic_DNA"/>
</dbReference>
<dbReference type="PIR" id="S57695">
    <property type="entry name" value="S57695"/>
</dbReference>
<dbReference type="RefSeq" id="NP_011746.3">
    <property type="nucleotide sequence ID" value="NM_001181359.3"/>
</dbReference>
<dbReference type="SMR" id="P50084"/>
<dbReference type="BioGRID" id="33482">
    <property type="interactions" value="46"/>
</dbReference>
<dbReference type="FunCoup" id="P50084">
    <property type="interactions" value="35"/>
</dbReference>
<dbReference type="STRING" id="4932.YGR230W"/>
<dbReference type="iPTMnet" id="P50084"/>
<dbReference type="PaxDb" id="4932-YGR230W"/>
<dbReference type="PeptideAtlas" id="P50084"/>
<dbReference type="EnsemblFungi" id="YGR230W_mRNA">
    <property type="protein sequence ID" value="YGR230W"/>
    <property type="gene ID" value="YGR230W"/>
</dbReference>
<dbReference type="GeneID" id="853145"/>
<dbReference type="KEGG" id="sce:YGR230W"/>
<dbReference type="AGR" id="SGD:S000003462"/>
<dbReference type="SGD" id="S000003462">
    <property type="gene designation" value="BNS1"/>
</dbReference>
<dbReference type="VEuPathDB" id="FungiDB:YGR230W"/>
<dbReference type="HOGENOM" id="CLU_154786_0_0_1"/>
<dbReference type="InParanoid" id="P50084"/>
<dbReference type="OMA" id="KVAHNTK"/>
<dbReference type="OrthoDB" id="5578329at2759"/>
<dbReference type="BioCyc" id="YEAST:G3O-30908-MONOMER"/>
<dbReference type="BioGRID-ORCS" id="853145">
    <property type="hits" value="4 hits in 10 CRISPR screens"/>
</dbReference>
<dbReference type="PRO" id="PR:P50084"/>
<dbReference type="Proteomes" id="UP000002311">
    <property type="component" value="Chromosome VII"/>
</dbReference>
<dbReference type="RNAct" id="P50084">
    <property type="molecule type" value="protein"/>
</dbReference>
<dbReference type="GO" id="GO:0051321">
    <property type="term" value="P:meiotic cell cycle"/>
    <property type="evidence" value="ECO:0000316"/>
    <property type="project" value="SGD"/>
</dbReference>
<dbReference type="GO" id="GO:1904750">
    <property type="term" value="P:negative regulation of protein localization to nucleolus"/>
    <property type="evidence" value="ECO:0000316"/>
    <property type="project" value="SGD"/>
</dbReference>
<dbReference type="InterPro" id="IPR007727">
    <property type="entry name" value="Spo12"/>
</dbReference>
<dbReference type="Pfam" id="PF05032">
    <property type="entry name" value="Spo12"/>
    <property type="match status" value="1"/>
</dbReference>
<reference key="1">
    <citation type="journal article" date="1996" name="Yeast">
        <title>Sequence analysis of the 43 kb CRM1-YLM9-PET54-DIE2-SMI1-PHO81-YHB4-PFK1 region from the right arm of Saccharomyces cerevisiae chromosome VII.</title>
        <authorList>
            <person name="van der Aart Q.J.M."/>
            <person name="Kleine K."/>
            <person name="Steensma H.Y."/>
        </authorList>
    </citation>
    <scope>NUCLEOTIDE SEQUENCE [GENOMIC DNA]</scope>
    <source>
        <strain>ATCC 204508 / S288c</strain>
    </source>
</reference>
<reference key="2">
    <citation type="journal article" date="1997" name="Nature">
        <title>The nucleotide sequence of Saccharomyces cerevisiae chromosome VII.</title>
        <authorList>
            <person name="Tettelin H."/>
            <person name="Agostoni-Carbone M.L."/>
            <person name="Albermann K."/>
            <person name="Albers M."/>
            <person name="Arroyo J."/>
            <person name="Backes U."/>
            <person name="Barreiros T."/>
            <person name="Bertani I."/>
            <person name="Bjourson A.J."/>
            <person name="Brueckner M."/>
            <person name="Bruschi C.V."/>
            <person name="Carignani G."/>
            <person name="Castagnoli L."/>
            <person name="Cerdan E."/>
            <person name="Clemente M.L."/>
            <person name="Coblenz A."/>
            <person name="Coglievina M."/>
            <person name="Coissac E."/>
            <person name="Defoor E."/>
            <person name="Del Bino S."/>
            <person name="Delius H."/>
            <person name="Delneri D."/>
            <person name="de Wergifosse P."/>
            <person name="Dujon B."/>
            <person name="Durand P."/>
            <person name="Entian K.-D."/>
            <person name="Eraso P."/>
            <person name="Escribano V."/>
            <person name="Fabiani L."/>
            <person name="Fartmann B."/>
            <person name="Feroli F."/>
            <person name="Feuermann M."/>
            <person name="Frontali L."/>
            <person name="Garcia-Gonzalez M."/>
            <person name="Garcia-Saez M.I."/>
            <person name="Goffeau A."/>
            <person name="Guerreiro P."/>
            <person name="Hani J."/>
            <person name="Hansen M."/>
            <person name="Hebling U."/>
            <person name="Hernandez K."/>
            <person name="Heumann K."/>
            <person name="Hilger F."/>
            <person name="Hofmann B."/>
            <person name="Indge K.J."/>
            <person name="James C.M."/>
            <person name="Klima R."/>
            <person name="Koetter P."/>
            <person name="Kramer B."/>
            <person name="Kramer W."/>
            <person name="Lauquin G."/>
            <person name="Leuther H."/>
            <person name="Louis E.J."/>
            <person name="Maillier E."/>
            <person name="Marconi A."/>
            <person name="Martegani E."/>
            <person name="Mazon M.J."/>
            <person name="Mazzoni C."/>
            <person name="McReynolds A.D.K."/>
            <person name="Melchioretto P."/>
            <person name="Mewes H.-W."/>
            <person name="Minenkova O."/>
            <person name="Mueller-Auer S."/>
            <person name="Nawrocki A."/>
            <person name="Netter P."/>
            <person name="Neu R."/>
            <person name="Nombela C."/>
            <person name="Oliver S.G."/>
            <person name="Panzeri L."/>
            <person name="Paoluzi S."/>
            <person name="Plevani P."/>
            <person name="Portetelle D."/>
            <person name="Portillo F."/>
            <person name="Potier S."/>
            <person name="Purnelle B."/>
            <person name="Rieger M."/>
            <person name="Riles L."/>
            <person name="Rinaldi T."/>
            <person name="Robben J."/>
            <person name="Rodrigues-Pousada C."/>
            <person name="Rodriguez-Belmonte E."/>
            <person name="Rodriguez-Torres A.M."/>
            <person name="Rose M."/>
            <person name="Ruzzi M."/>
            <person name="Saliola M."/>
            <person name="Sanchez-Perez M."/>
            <person name="Schaefer B."/>
            <person name="Schaefer M."/>
            <person name="Scharfe M."/>
            <person name="Schmidheini T."/>
            <person name="Schreer A."/>
            <person name="Skala J."/>
            <person name="Souciet J.-L."/>
            <person name="Steensma H.Y."/>
            <person name="Talla E."/>
            <person name="Thierry A."/>
            <person name="Vandenbol M."/>
            <person name="van der Aart Q.J.M."/>
            <person name="Van Dyck L."/>
            <person name="Vanoni M."/>
            <person name="Verhasselt P."/>
            <person name="Voet M."/>
            <person name="Volckaert G."/>
            <person name="Wambutt R."/>
            <person name="Watson M.D."/>
            <person name="Weber N."/>
            <person name="Wedler E."/>
            <person name="Wedler H."/>
            <person name="Wipfli P."/>
            <person name="Wolf K."/>
            <person name="Wright L.F."/>
            <person name="Zaccaria P."/>
            <person name="Zimmermann M."/>
            <person name="Zollner A."/>
            <person name="Kleine K."/>
        </authorList>
    </citation>
    <scope>NUCLEOTIDE SEQUENCE [LARGE SCALE GENOMIC DNA]</scope>
    <source>
        <strain>ATCC 204508 / S288c</strain>
    </source>
</reference>
<reference key="3">
    <citation type="journal article" date="2014" name="G3 (Bethesda)">
        <title>The reference genome sequence of Saccharomyces cerevisiae: Then and now.</title>
        <authorList>
            <person name="Engel S.R."/>
            <person name="Dietrich F.S."/>
            <person name="Fisk D.G."/>
            <person name="Binkley G."/>
            <person name="Balakrishnan R."/>
            <person name="Costanzo M.C."/>
            <person name="Dwight S.S."/>
            <person name="Hitz B.C."/>
            <person name="Karra K."/>
            <person name="Nash R.S."/>
            <person name="Weng S."/>
            <person name="Wong E.D."/>
            <person name="Lloyd P."/>
            <person name="Skrzypek M.S."/>
            <person name="Miyasato S.R."/>
            <person name="Simison M."/>
            <person name="Cherry J.M."/>
        </authorList>
    </citation>
    <scope>GENOME REANNOTATION</scope>
    <source>
        <strain>ATCC 204508 / S288c</strain>
    </source>
</reference>
<reference key="4">
    <citation type="journal article" date="2007" name="Genome Res.">
        <title>Approaching a complete repository of sequence-verified protein-encoding clones for Saccharomyces cerevisiae.</title>
        <authorList>
            <person name="Hu Y."/>
            <person name="Rolfs A."/>
            <person name="Bhullar B."/>
            <person name="Murthy T.V.S."/>
            <person name="Zhu C."/>
            <person name="Berger M.F."/>
            <person name="Camargo A.A."/>
            <person name="Kelley F."/>
            <person name="McCarron S."/>
            <person name="Jepson D."/>
            <person name="Richardson A."/>
            <person name="Raphael J."/>
            <person name="Moreira D."/>
            <person name="Taycher E."/>
            <person name="Zuo D."/>
            <person name="Mohr S."/>
            <person name="Kane M.F."/>
            <person name="Williamson J."/>
            <person name="Simpson A.J.G."/>
            <person name="Bulyk M.L."/>
            <person name="Harlow E."/>
            <person name="Marsischky G."/>
            <person name="Kolodner R.D."/>
            <person name="LaBaer J."/>
        </authorList>
    </citation>
    <scope>NUCLEOTIDE SEQUENCE [GENOMIC DNA]</scope>
    <source>
        <strain>ATCC 204508 / S288c</strain>
    </source>
</reference>
<reference key="5">
    <citation type="journal article" date="1998" name="Mol. Biol. Cell">
        <title>A late mitotic regulatory network controlling cyclin destruction in Saccharomyces cerevisiae.</title>
        <authorList>
            <person name="Jaspersen S.L."/>
            <person name="Charles J.F."/>
            <person name="Tinker-Kulberg R.L."/>
            <person name="Morgan D.O."/>
        </authorList>
    </citation>
    <scope>FUNCTION</scope>
</reference>
<reference key="6">
    <citation type="journal article" date="1999" name="Mol. Biol. Cell">
        <title>Genetic and biochemical characterization of the yeast spo12 protein.</title>
        <authorList>
            <person name="Grether M.E."/>
            <person name="Herskowitz I."/>
        </authorList>
    </citation>
    <scope>FUNCTION</scope>
</reference>
<reference key="7">
    <citation type="journal article" date="2003" name="Mol. Biol. Cell">
        <title>The role of the polo kinase Cdc5 in controlling Cdc14 localization.</title>
        <authorList>
            <person name="Visintin R."/>
            <person name="Stegmeier F."/>
            <person name="Amon A."/>
        </authorList>
    </citation>
    <scope>FUNCTION</scope>
</reference>
<reference key="8">
    <citation type="journal article" date="2004" name="Cell">
        <title>Cdc14 and condensin control the dissolution of cohesin-independent chromosome linkages at repeated DNA.</title>
        <authorList>
            <person name="D'Amours D."/>
            <person name="Stegmeier F."/>
            <person name="Amon A."/>
        </authorList>
    </citation>
    <scope>FUNCTION</scope>
</reference>